<comment type="function">
    <text evidence="1">Catalyzes the methyl esterification of L-isoaspartyl residues in peptides and proteins that result from spontaneous decomposition of normal L-aspartyl and L-asparaginyl residues. It plays a role in the repair and/or degradation of damaged proteins.</text>
</comment>
<comment type="catalytic activity">
    <reaction evidence="1">
        <text>[protein]-L-isoaspartate + S-adenosyl-L-methionine = [protein]-L-isoaspartate alpha-methyl ester + S-adenosyl-L-homocysteine</text>
        <dbReference type="Rhea" id="RHEA:12705"/>
        <dbReference type="Rhea" id="RHEA-COMP:12143"/>
        <dbReference type="Rhea" id="RHEA-COMP:12144"/>
        <dbReference type="ChEBI" id="CHEBI:57856"/>
        <dbReference type="ChEBI" id="CHEBI:59789"/>
        <dbReference type="ChEBI" id="CHEBI:90596"/>
        <dbReference type="ChEBI" id="CHEBI:90598"/>
        <dbReference type="EC" id="2.1.1.77"/>
    </reaction>
</comment>
<comment type="subcellular location">
    <subcellularLocation>
        <location evidence="1">Cytoplasm</location>
    </subcellularLocation>
</comment>
<comment type="similarity">
    <text evidence="1">Belongs to the methyltransferase superfamily. L-isoaspartyl/D-aspartyl protein methyltransferase family.</text>
</comment>
<feature type="chain" id="PRO_1000004821" description="Protein-L-isoaspartate O-methyltransferase">
    <location>
        <begin position="1"/>
        <end position="212"/>
    </location>
</feature>
<feature type="active site" evidence="1">
    <location>
        <position position="60"/>
    </location>
</feature>
<protein>
    <recommendedName>
        <fullName evidence="1">Protein-L-isoaspartate O-methyltransferase</fullName>
        <ecNumber evidence="1">2.1.1.77</ecNumber>
    </recommendedName>
    <alternativeName>
        <fullName evidence="1">L-isoaspartyl protein carboxyl methyltransferase</fullName>
    </alternativeName>
    <alternativeName>
        <fullName evidence="1">Protein L-isoaspartyl methyltransferase</fullName>
    </alternativeName>
    <alternativeName>
        <fullName evidence="1">Protein-beta-aspartate methyltransferase</fullName>
        <shortName evidence="1">PIMT</shortName>
    </alternativeName>
</protein>
<organism>
    <name type="scientific">Methanococcus maripaludis (strain C5 / ATCC BAA-1333)</name>
    <dbReference type="NCBI Taxonomy" id="402880"/>
    <lineage>
        <taxon>Archaea</taxon>
        <taxon>Methanobacteriati</taxon>
        <taxon>Methanobacteriota</taxon>
        <taxon>Methanomada group</taxon>
        <taxon>Methanococci</taxon>
        <taxon>Methanococcales</taxon>
        <taxon>Methanococcaceae</taxon>
        <taxon>Methanococcus</taxon>
    </lineage>
</organism>
<keyword id="KW-0963">Cytoplasm</keyword>
<keyword id="KW-0489">Methyltransferase</keyword>
<keyword id="KW-0949">S-adenosyl-L-methionine</keyword>
<keyword id="KW-0808">Transferase</keyword>
<accession>A4G087</accession>
<proteinExistence type="inferred from homology"/>
<evidence type="ECO:0000255" key="1">
    <source>
        <dbReference type="HAMAP-Rule" id="MF_00090"/>
    </source>
</evidence>
<dbReference type="EC" id="2.1.1.77" evidence="1"/>
<dbReference type="EMBL" id="CP000609">
    <property type="protein sequence ID" value="ABO35871.1"/>
    <property type="molecule type" value="Genomic_DNA"/>
</dbReference>
<dbReference type="RefSeq" id="WP_011869318.1">
    <property type="nucleotide sequence ID" value="NC_009135.1"/>
</dbReference>
<dbReference type="SMR" id="A4G087"/>
<dbReference type="STRING" id="402880.MmarC5_1574"/>
<dbReference type="GeneID" id="4928503"/>
<dbReference type="KEGG" id="mmq:MmarC5_1574"/>
<dbReference type="eggNOG" id="arCOG00976">
    <property type="taxonomic scope" value="Archaea"/>
</dbReference>
<dbReference type="HOGENOM" id="CLU_055432_2_0_2"/>
<dbReference type="OrthoDB" id="33618at2157"/>
<dbReference type="Proteomes" id="UP000000253">
    <property type="component" value="Chromosome"/>
</dbReference>
<dbReference type="GO" id="GO:0005737">
    <property type="term" value="C:cytoplasm"/>
    <property type="evidence" value="ECO:0007669"/>
    <property type="project" value="UniProtKB-SubCell"/>
</dbReference>
<dbReference type="GO" id="GO:0004719">
    <property type="term" value="F:protein-L-isoaspartate (D-aspartate) O-methyltransferase activity"/>
    <property type="evidence" value="ECO:0007669"/>
    <property type="project" value="UniProtKB-UniRule"/>
</dbReference>
<dbReference type="GO" id="GO:0032259">
    <property type="term" value="P:methylation"/>
    <property type="evidence" value="ECO:0007669"/>
    <property type="project" value="UniProtKB-KW"/>
</dbReference>
<dbReference type="GO" id="GO:0036211">
    <property type="term" value="P:protein modification process"/>
    <property type="evidence" value="ECO:0007669"/>
    <property type="project" value="UniProtKB-UniRule"/>
</dbReference>
<dbReference type="GO" id="GO:0030091">
    <property type="term" value="P:protein repair"/>
    <property type="evidence" value="ECO:0007669"/>
    <property type="project" value="UniProtKB-UniRule"/>
</dbReference>
<dbReference type="CDD" id="cd02440">
    <property type="entry name" value="AdoMet_MTases"/>
    <property type="match status" value="1"/>
</dbReference>
<dbReference type="FunFam" id="3.40.50.150:FF:000010">
    <property type="entry name" value="Protein-L-isoaspartate O-methyltransferase"/>
    <property type="match status" value="1"/>
</dbReference>
<dbReference type="Gene3D" id="3.40.50.150">
    <property type="entry name" value="Vaccinia Virus protein VP39"/>
    <property type="match status" value="1"/>
</dbReference>
<dbReference type="HAMAP" id="MF_00090">
    <property type="entry name" value="PIMT"/>
    <property type="match status" value="1"/>
</dbReference>
<dbReference type="InterPro" id="IPR000682">
    <property type="entry name" value="PCMT"/>
</dbReference>
<dbReference type="InterPro" id="IPR029063">
    <property type="entry name" value="SAM-dependent_MTases_sf"/>
</dbReference>
<dbReference type="NCBIfam" id="TIGR00080">
    <property type="entry name" value="pimt"/>
    <property type="match status" value="1"/>
</dbReference>
<dbReference type="NCBIfam" id="NF001453">
    <property type="entry name" value="PRK00312.1"/>
    <property type="match status" value="1"/>
</dbReference>
<dbReference type="NCBIfam" id="NF010549">
    <property type="entry name" value="PRK13942.1"/>
    <property type="match status" value="1"/>
</dbReference>
<dbReference type="PANTHER" id="PTHR11579">
    <property type="entry name" value="PROTEIN-L-ISOASPARTATE O-METHYLTRANSFERASE"/>
    <property type="match status" value="1"/>
</dbReference>
<dbReference type="PANTHER" id="PTHR11579:SF0">
    <property type="entry name" value="PROTEIN-L-ISOASPARTATE(D-ASPARTATE) O-METHYLTRANSFERASE"/>
    <property type="match status" value="1"/>
</dbReference>
<dbReference type="Pfam" id="PF01135">
    <property type="entry name" value="PCMT"/>
    <property type="match status" value="1"/>
</dbReference>
<dbReference type="SUPFAM" id="SSF53335">
    <property type="entry name" value="S-adenosyl-L-methionine-dependent methyltransferases"/>
    <property type="match status" value="1"/>
</dbReference>
<dbReference type="PROSITE" id="PS01279">
    <property type="entry name" value="PCMT"/>
    <property type="match status" value="1"/>
</dbReference>
<reference key="1">
    <citation type="submission" date="2007-03" db="EMBL/GenBank/DDBJ databases">
        <title>Complete sequence of chromosome of Methanococcus maripaludis C5.</title>
        <authorList>
            <consortium name="US DOE Joint Genome Institute"/>
            <person name="Copeland A."/>
            <person name="Lucas S."/>
            <person name="Lapidus A."/>
            <person name="Barry K."/>
            <person name="Glavina del Rio T."/>
            <person name="Dalin E."/>
            <person name="Tice H."/>
            <person name="Pitluck S."/>
            <person name="Chertkov O."/>
            <person name="Brettin T."/>
            <person name="Bruce D."/>
            <person name="Han C."/>
            <person name="Detter J.C."/>
            <person name="Schmutz J."/>
            <person name="Larimer F."/>
            <person name="Land M."/>
            <person name="Hauser L."/>
            <person name="Kyrpides N."/>
            <person name="Mikhailova N."/>
            <person name="Sieprawska-Lupa M."/>
            <person name="Whitman W.B."/>
            <person name="Richardson P."/>
        </authorList>
    </citation>
    <scope>NUCLEOTIDE SEQUENCE [LARGE SCALE GENOMIC DNA]</scope>
    <source>
        <strain>C5 / ATCC BAA-1333</strain>
    </source>
</reference>
<name>PIMT_METM5</name>
<sequence length="212" mass="23030">MPLNEIIGVIGNLISKGYIQKQSVIDALMSVPRHKFIPKAMEEYAYIDSPLGIGCGQTISAIHMVGIMCEELDLDVGQNVLEVGTGSGYHAAVVSEIVGESGKVTTIERIPELFEKSKQVLSELGYENVEVVLGDGTKGYLENAPYDRIYVTASGPNVPIALFEQLNDGGIILAPVGSHFQTLMRYKKINGKIFKEKLLEVAFVPLIGENGF</sequence>
<gene>
    <name evidence="1" type="primary">pcm</name>
    <name type="ordered locus">MmarC5_1574</name>
</gene>